<keyword id="KW-0150">Chloroplast</keyword>
<keyword id="KW-0249">Electron transport</keyword>
<keyword id="KW-0349">Heme</keyword>
<keyword id="KW-0408">Iron</keyword>
<keyword id="KW-0472">Membrane</keyword>
<keyword id="KW-0479">Metal-binding</keyword>
<keyword id="KW-0602">Photosynthesis</keyword>
<keyword id="KW-0934">Plastid</keyword>
<keyword id="KW-0732">Signal</keyword>
<keyword id="KW-0793">Thylakoid</keyword>
<keyword id="KW-0812">Transmembrane</keyword>
<keyword id="KW-1133">Transmembrane helix</keyword>
<keyword id="KW-0813">Transport</keyword>
<organism>
    <name type="scientific">Staurastrum punctulatum</name>
    <name type="common">Green alga</name>
    <name type="synonym">Cosmoastrum punctulatum</name>
    <dbReference type="NCBI Taxonomy" id="102822"/>
    <lineage>
        <taxon>Eukaryota</taxon>
        <taxon>Viridiplantae</taxon>
        <taxon>Streptophyta</taxon>
        <taxon>Zygnematophyceae</taxon>
        <taxon>Zygnematophycidae</taxon>
        <taxon>Desmidiales</taxon>
        <taxon>Desmidiaceae</taxon>
        <taxon>Staurastrum</taxon>
    </lineage>
</organism>
<reference key="1">
    <citation type="journal article" date="2005" name="BMC Biol.">
        <title>The complete chloroplast DNA sequences of the charophycean green algae Staurastrum and Zygnema reveal that the chloroplast genome underwent extensive changes during the evolution of the Zygnematales.</title>
        <authorList>
            <person name="Turmel M."/>
            <person name="Otis C."/>
            <person name="Lemieux C."/>
        </authorList>
    </citation>
    <scope>NUCLEOTIDE SEQUENCE [LARGE SCALE GENOMIC DNA]</scope>
</reference>
<geneLocation type="chloroplast"/>
<dbReference type="EMBL" id="AY958085">
    <property type="protein sequence ID" value="AAX45709.1"/>
    <property type="molecule type" value="Genomic_DNA"/>
</dbReference>
<dbReference type="RefSeq" id="YP_636404.1">
    <property type="nucleotide sequence ID" value="NC_008116.1"/>
</dbReference>
<dbReference type="SMR" id="Q32RX2"/>
<dbReference type="GeneID" id="4108658"/>
<dbReference type="GO" id="GO:0009535">
    <property type="term" value="C:chloroplast thylakoid membrane"/>
    <property type="evidence" value="ECO:0007669"/>
    <property type="project" value="UniProtKB-SubCell"/>
</dbReference>
<dbReference type="GO" id="GO:0009055">
    <property type="term" value="F:electron transfer activity"/>
    <property type="evidence" value="ECO:0007669"/>
    <property type="project" value="UniProtKB-UniRule"/>
</dbReference>
<dbReference type="GO" id="GO:0020037">
    <property type="term" value="F:heme binding"/>
    <property type="evidence" value="ECO:0007669"/>
    <property type="project" value="InterPro"/>
</dbReference>
<dbReference type="GO" id="GO:0005506">
    <property type="term" value="F:iron ion binding"/>
    <property type="evidence" value="ECO:0007669"/>
    <property type="project" value="InterPro"/>
</dbReference>
<dbReference type="GO" id="GO:0015979">
    <property type="term" value="P:photosynthesis"/>
    <property type="evidence" value="ECO:0007669"/>
    <property type="project" value="UniProtKB-UniRule"/>
</dbReference>
<dbReference type="FunFam" id="1.20.5.700:FF:000001">
    <property type="entry name" value="Cytochrome f"/>
    <property type="match status" value="1"/>
</dbReference>
<dbReference type="FunFam" id="2.40.50.100:FF:000007">
    <property type="entry name" value="Cytochrome f"/>
    <property type="match status" value="1"/>
</dbReference>
<dbReference type="FunFam" id="2.60.40.830:FF:000001">
    <property type="entry name" value="Cytochrome f"/>
    <property type="match status" value="1"/>
</dbReference>
<dbReference type="Gene3D" id="2.40.50.100">
    <property type="match status" value="1"/>
</dbReference>
<dbReference type="Gene3D" id="2.60.40.830">
    <property type="entry name" value="Cytochrome f large domain"/>
    <property type="match status" value="1"/>
</dbReference>
<dbReference type="Gene3D" id="1.20.5.700">
    <property type="entry name" value="Single helix bin"/>
    <property type="match status" value="1"/>
</dbReference>
<dbReference type="HAMAP" id="MF_00610">
    <property type="entry name" value="Cytb6_f_cytF"/>
    <property type="match status" value="1"/>
</dbReference>
<dbReference type="InterPro" id="IPR024058">
    <property type="entry name" value="Cyt-f_TM"/>
</dbReference>
<dbReference type="InterPro" id="IPR002325">
    <property type="entry name" value="Cyt_f"/>
</dbReference>
<dbReference type="InterPro" id="IPR024094">
    <property type="entry name" value="Cyt_f_lg_dom"/>
</dbReference>
<dbReference type="InterPro" id="IPR036826">
    <property type="entry name" value="Cyt_f_lg_dom_sf"/>
</dbReference>
<dbReference type="InterPro" id="IPR011054">
    <property type="entry name" value="Rudment_hybrid_motif"/>
</dbReference>
<dbReference type="PANTHER" id="PTHR33288">
    <property type="match status" value="1"/>
</dbReference>
<dbReference type="PANTHER" id="PTHR33288:SF10">
    <property type="entry name" value="CYTOCHROME F"/>
    <property type="match status" value="1"/>
</dbReference>
<dbReference type="Pfam" id="PF01333">
    <property type="entry name" value="Apocytochr_F_C"/>
    <property type="match status" value="1"/>
</dbReference>
<dbReference type="Pfam" id="PF16639">
    <property type="entry name" value="Apocytochr_F_N"/>
    <property type="match status" value="1"/>
</dbReference>
<dbReference type="PRINTS" id="PR00610">
    <property type="entry name" value="CYTOCHROMEF"/>
</dbReference>
<dbReference type="SUPFAM" id="SSF103431">
    <property type="entry name" value="Cytochrome f subunit of the cytochrome b6f complex, transmembrane anchor"/>
    <property type="match status" value="1"/>
</dbReference>
<dbReference type="SUPFAM" id="SSF49441">
    <property type="entry name" value="Cytochrome f, large domain"/>
    <property type="match status" value="1"/>
</dbReference>
<dbReference type="SUPFAM" id="SSF51246">
    <property type="entry name" value="Rudiment single hybrid motif"/>
    <property type="match status" value="1"/>
</dbReference>
<dbReference type="PROSITE" id="PS51010">
    <property type="entry name" value="CYTF"/>
    <property type="match status" value="1"/>
</dbReference>
<protein>
    <recommendedName>
        <fullName evidence="2">Cytochrome f</fullName>
    </recommendedName>
</protein>
<proteinExistence type="inferred from homology"/>
<gene>
    <name evidence="2" type="primary">petA</name>
</gene>
<name>CYF_STAPU</name>
<comment type="function">
    <text evidence="2">Component of the cytochrome b6-f complex, which mediates electron transfer between photosystem II (PSII) and photosystem I (PSI), cyclic electron flow around PSI, and state transitions.</text>
</comment>
<comment type="cofactor">
    <cofactor evidence="2">
        <name>heme</name>
        <dbReference type="ChEBI" id="CHEBI:30413"/>
    </cofactor>
    <text evidence="2">Binds 1 heme group covalently.</text>
</comment>
<comment type="subunit">
    <text evidence="1">The 4 large subunits of the cytochrome b6-f complex are cytochrome b6, subunit IV (17 kDa polypeptide, petD), cytochrome f and the Rieske protein, while the 4 small subunits are PetG, PetL, PetM and PetN. The complex functions as a dimer (By similarity).</text>
</comment>
<comment type="subcellular location">
    <subcellularLocation>
        <location evidence="2">Plastid</location>
        <location evidence="2">Chloroplast thylakoid membrane</location>
        <topology evidence="2">Single-pass membrane protein</topology>
    </subcellularLocation>
</comment>
<comment type="similarity">
    <text evidence="2">Belongs to the cytochrome f family.</text>
</comment>
<feature type="signal peptide" evidence="2">
    <location>
        <begin position="1"/>
        <end position="35"/>
    </location>
</feature>
<feature type="chain" id="PRO_0000275457" description="Cytochrome f">
    <location>
        <begin position="36"/>
        <end position="319"/>
    </location>
</feature>
<feature type="transmembrane region" description="Helical" evidence="2">
    <location>
        <begin position="285"/>
        <end position="305"/>
    </location>
</feature>
<feature type="binding site" description="axial binding residue" evidence="2">
    <location>
        <position position="36"/>
    </location>
    <ligand>
        <name>heme</name>
        <dbReference type="ChEBI" id="CHEBI:30413"/>
    </ligand>
    <ligandPart>
        <name>Fe</name>
        <dbReference type="ChEBI" id="CHEBI:18248"/>
    </ligandPart>
</feature>
<feature type="binding site" description="covalent" evidence="2">
    <location>
        <position position="56"/>
    </location>
    <ligand>
        <name>heme</name>
        <dbReference type="ChEBI" id="CHEBI:30413"/>
    </ligand>
</feature>
<feature type="binding site" description="covalent" evidence="2">
    <location>
        <position position="59"/>
    </location>
    <ligand>
        <name>heme</name>
        <dbReference type="ChEBI" id="CHEBI:30413"/>
    </ligand>
</feature>
<feature type="binding site" description="axial binding residue" evidence="2">
    <location>
        <position position="60"/>
    </location>
    <ligand>
        <name>heme</name>
        <dbReference type="ChEBI" id="CHEBI:30413"/>
    </ligand>
    <ligandPart>
        <name>Fe</name>
        <dbReference type="ChEBI" id="CHEBI:18248"/>
    </ligandPart>
</feature>
<accession>Q32RX2</accession>
<sequence>MQNKDACKSLSSWVSLSISLLVLTVPLIWPYNSTAFPIYAQQNYESPREATGRIVCANCHLAKKAVDIEVPQAVLPDTVFEAVVKIPYDTQIKQVLSNGKKGGLNVGAVLILPEGFELAPSDRIPPELKEKISNIYFQPYSPEKKNILVVGPLPGNKYSELVFPILSPDPATNKKASFLKYPIYLGGNRGRGQVYPDGSKSNNNVFSASTAGTISQITRQKKGGYEVIIKTTDGREVTDIIPPGPELIVSEGESIKADQLLTNNPNVGGFGQADAEIVLQDPLRIQGLLVFFASVILAQIFLVLKKKQFEKVQLAEMNF</sequence>
<evidence type="ECO:0000250" key="1"/>
<evidence type="ECO:0000255" key="2">
    <source>
        <dbReference type="HAMAP-Rule" id="MF_00610"/>
    </source>
</evidence>